<evidence type="ECO:0000255" key="1">
    <source>
        <dbReference type="HAMAP-Rule" id="MF_00391"/>
    </source>
</evidence>
<evidence type="ECO:0000256" key="2">
    <source>
        <dbReference type="SAM" id="MobiDB-lite"/>
    </source>
</evidence>
<evidence type="ECO:0000305" key="3"/>
<sequence length="44" mass="5324">MKRTYQPNKRKRSKVHGFRARMSTRNGRKVLARRRRKGRKVLSA</sequence>
<keyword id="KW-0687">Ribonucleoprotein</keyword>
<keyword id="KW-0689">Ribosomal protein</keyword>
<organism>
    <name type="scientific">Geobacillus sp. (strain WCH70)</name>
    <dbReference type="NCBI Taxonomy" id="471223"/>
    <lineage>
        <taxon>Bacteria</taxon>
        <taxon>Bacillati</taxon>
        <taxon>Bacillota</taxon>
        <taxon>Bacilli</taxon>
        <taxon>Bacillales</taxon>
        <taxon>Anoxybacillaceae</taxon>
        <taxon>Geobacillus</taxon>
    </lineage>
</organism>
<proteinExistence type="inferred from homology"/>
<feature type="chain" id="PRO_1000205830" description="Large ribosomal subunit protein bL34">
    <location>
        <begin position="1"/>
        <end position="44"/>
    </location>
</feature>
<feature type="region of interest" description="Disordered" evidence="2">
    <location>
        <begin position="1"/>
        <end position="44"/>
    </location>
</feature>
<feature type="compositionally biased region" description="Basic residues" evidence="2">
    <location>
        <begin position="1"/>
        <end position="19"/>
    </location>
</feature>
<feature type="compositionally biased region" description="Basic residues" evidence="2">
    <location>
        <begin position="26"/>
        <end position="44"/>
    </location>
</feature>
<name>RL34_GEOSW</name>
<dbReference type="EMBL" id="CP001638">
    <property type="protein sequence ID" value="ACS26070.1"/>
    <property type="molecule type" value="Genomic_DNA"/>
</dbReference>
<dbReference type="SMR" id="C5D9Z2"/>
<dbReference type="STRING" id="471223.GWCH70_3434"/>
<dbReference type="KEGG" id="gwc:GWCH70_3434"/>
<dbReference type="eggNOG" id="COG0230">
    <property type="taxonomic scope" value="Bacteria"/>
</dbReference>
<dbReference type="HOGENOM" id="CLU_129938_2_0_9"/>
<dbReference type="GO" id="GO:1990904">
    <property type="term" value="C:ribonucleoprotein complex"/>
    <property type="evidence" value="ECO:0007669"/>
    <property type="project" value="UniProtKB-KW"/>
</dbReference>
<dbReference type="GO" id="GO:0005840">
    <property type="term" value="C:ribosome"/>
    <property type="evidence" value="ECO:0007669"/>
    <property type="project" value="UniProtKB-KW"/>
</dbReference>
<dbReference type="GO" id="GO:0003735">
    <property type="term" value="F:structural constituent of ribosome"/>
    <property type="evidence" value="ECO:0007669"/>
    <property type="project" value="InterPro"/>
</dbReference>
<dbReference type="GO" id="GO:0006412">
    <property type="term" value="P:translation"/>
    <property type="evidence" value="ECO:0007669"/>
    <property type="project" value="UniProtKB-UniRule"/>
</dbReference>
<dbReference type="FunFam" id="1.10.287.3980:FF:000001">
    <property type="entry name" value="Mitochondrial ribosomal protein L34"/>
    <property type="match status" value="1"/>
</dbReference>
<dbReference type="Gene3D" id="1.10.287.3980">
    <property type="match status" value="1"/>
</dbReference>
<dbReference type="HAMAP" id="MF_00391">
    <property type="entry name" value="Ribosomal_bL34"/>
    <property type="match status" value="1"/>
</dbReference>
<dbReference type="InterPro" id="IPR000271">
    <property type="entry name" value="Ribosomal_bL34"/>
</dbReference>
<dbReference type="InterPro" id="IPR020939">
    <property type="entry name" value="Ribosomal_bL34_CS"/>
</dbReference>
<dbReference type="NCBIfam" id="TIGR01030">
    <property type="entry name" value="rpmH_bact"/>
    <property type="match status" value="1"/>
</dbReference>
<dbReference type="PANTHER" id="PTHR14503:SF4">
    <property type="entry name" value="LARGE RIBOSOMAL SUBUNIT PROTEIN BL34M"/>
    <property type="match status" value="1"/>
</dbReference>
<dbReference type="PANTHER" id="PTHR14503">
    <property type="entry name" value="MITOCHONDRIAL RIBOSOMAL PROTEIN 34 FAMILY MEMBER"/>
    <property type="match status" value="1"/>
</dbReference>
<dbReference type="Pfam" id="PF00468">
    <property type="entry name" value="Ribosomal_L34"/>
    <property type="match status" value="1"/>
</dbReference>
<dbReference type="PROSITE" id="PS00784">
    <property type="entry name" value="RIBOSOMAL_L34"/>
    <property type="match status" value="1"/>
</dbReference>
<comment type="similarity">
    <text evidence="1">Belongs to the bacterial ribosomal protein bL34 family.</text>
</comment>
<accession>C5D9Z2</accession>
<reference key="1">
    <citation type="submission" date="2009-06" db="EMBL/GenBank/DDBJ databases">
        <title>Complete sequence of chromosome of Geopacillus sp. WCH70.</title>
        <authorList>
            <consortium name="US DOE Joint Genome Institute"/>
            <person name="Lucas S."/>
            <person name="Copeland A."/>
            <person name="Lapidus A."/>
            <person name="Glavina del Rio T."/>
            <person name="Dalin E."/>
            <person name="Tice H."/>
            <person name="Bruce D."/>
            <person name="Goodwin L."/>
            <person name="Pitluck S."/>
            <person name="Chertkov O."/>
            <person name="Brettin T."/>
            <person name="Detter J.C."/>
            <person name="Han C."/>
            <person name="Larimer F."/>
            <person name="Land M."/>
            <person name="Hauser L."/>
            <person name="Kyrpides N."/>
            <person name="Mikhailova N."/>
            <person name="Brumm P."/>
            <person name="Mead D.A."/>
            <person name="Richardson P."/>
        </authorList>
    </citation>
    <scope>NUCLEOTIDE SEQUENCE [LARGE SCALE GENOMIC DNA]</scope>
    <source>
        <strain>WCH70</strain>
    </source>
</reference>
<protein>
    <recommendedName>
        <fullName evidence="1">Large ribosomal subunit protein bL34</fullName>
    </recommendedName>
    <alternativeName>
        <fullName evidence="3">50S ribosomal protein L34</fullName>
    </alternativeName>
</protein>
<gene>
    <name evidence="1" type="primary">rpmH</name>
    <name type="ordered locus">GWCH70_3434</name>
</gene>